<keyword id="KW-0175">Coiled coil</keyword>
<keyword id="KW-0539">Nucleus</keyword>
<keyword id="KW-1185">Reference proteome</keyword>
<keyword id="KW-0687">Ribonucleoprotein</keyword>
<keyword id="KW-0690">Ribosome biogenesis</keyword>
<keyword id="KW-0698">rRNA processing</keyword>
<feature type="chain" id="PRO_0000397652" description="rRNA biogenesis protein RRP36">
    <location>
        <begin position="1"/>
        <end position="291"/>
    </location>
</feature>
<feature type="region of interest" description="Disordered" evidence="3">
    <location>
        <begin position="1"/>
        <end position="138"/>
    </location>
</feature>
<feature type="region of interest" description="Disordered" evidence="3">
    <location>
        <begin position="174"/>
        <end position="194"/>
    </location>
</feature>
<feature type="region of interest" description="Disordered" evidence="3">
    <location>
        <begin position="255"/>
        <end position="291"/>
    </location>
</feature>
<feature type="coiled-coil region" evidence="2">
    <location>
        <begin position="188"/>
        <end position="215"/>
    </location>
</feature>
<feature type="compositionally biased region" description="Acidic residues" evidence="3">
    <location>
        <begin position="67"/>
        <end position="84"/>
    </location>
</feature>
<feature type="compositionally biased region" description="Polar residues" evidence="3">
    <location>
        <begin position="89"/>
        <end position="101"/>
    </location>
</feature>
<feature type="compositionally biased region" description="Basic and acidic residues" evidence="3">
    <location>
        <begin position="125"/>
        <end position="136"/>
    </location>
</feature>
<feature type="compositionally biased region" description="Basic and acidic residues" evidence="3">
    <location>
        <begin position="255"/>
        <end position="269"/>
    </location>
</feature>
<comment type="function">
    <text evidence="1">Component of the 90S pre-ribosome involved in the maturation of rRNAs. Required for early cleavages of the pre-RNAs in the 40S ribosomal subunit maturation pathway (By similarity).</text>
</comment>
<comment type="subunit">
    <text evidence="1">Associates with 90S and pre-40S pre-ribosomal particles.</text>
</comment>
<comment type="subcellular location">
    <subcellularLocation>
        <location evidence="1">Nucleus</location>
        <location evidence="1">Nucleolus</location>
    </subcellularLocation>
</comment>
<comment type="similarity">
    <text evidence="4">Belongs to the RRP36 family.</text>
</comment>
<sequence>MRPSYNDDGFSDDEFTNSILTKRDEQDDSLESMTFGALNSAQNELLGKKKKKKSIQTESKKRKYSESESEEDSEDSEEESDSDSDAPPQENSSRGKTSRFQKNGEKKKRSKHAPAETSSKKPVSRIREIPGLKSSKESTLYTDIRFDPAYGKADLRKTRKDYAFLDEYRQSEVKSMETMLKDKKSGQMLSNRDREEIQLQLQSLKSRLDTMKNRDLEEKILADHKRNQIKGFKDGQQNNPYFLKRSDKRKLIQKAKFDSMKASQREKVMERKRKKRLGKEFRQLEFNQPRH</sequence>
<dbReference type="EMBL" id="CP000496">
    <property type="protein sequence ID" value="ABN65002.2"/>
    <property type="molecule type" value="Genomic_DNA"/>
</dbReference>
<dbReference type="RefSeq" id="XP_001383031.2">
    <property type="nucleotide sequence ID" value="XM_001382994.1"/>
</dbReference>
<dbReference type="SMR" id="A3LP95"/>
<dbReference type="FunCoup" id="A3LP95">
    <property type="interactions" value="575"/>
</dbReference>
<dbReference type="STRING" id="322104.A3LP95"/>
<dbReference type="GeneID" id="4836913"/>
<dbReference type="KEGG" id="pic:PICST_35049"/>
<dbReference type="eggNOG" id="KOG3190">
    <property type="taxonomic scope" value="Eukaryota"/>
</dbReference>
<dbReference type="HOGENOM" id="CLU_048802_3_0_1"/>
<dbReference type="InParanoid" id="A3LP95"/>
<dbReference type="OMA" id="ERKEMPW"/>
<dbReference type="OrthoDB" id="448446at2759"/>
<dbReference type="Proteomes" id="UP000002258">
    <property type="component" value="Chromosome 2"/>
</dbReference>
<dbReference type="GO" id="GO:0030686">
    <property type="term" value="C:90S preribosome"/>
    <property type="evidence" value="ECO:0007669"/>
    <property type="project" value="EnsemblFungi"/>
</dbReference>
<dbReference type="GO" id="GO:0005730">
    <property type="term" value="C:nucleolus"/>
    <property type="evidence" value="ECO:0007669"/>
    <property type="project" value="UniProtKB-SubCell"/>
</dbReference>
<dbReference type="GO" id="GO:0032040">
    <property type="term" value="C:small-subunit processome"/>
    <property type="evidence" value="ECO:0007669"/>
    <property type="project" value="EnsemblFungi"/>
</dbReference>
<dbReference type="GO" id="GO:0000462">
    <property type="term" value="P:maturation of SSU-rRNA from tricistronic rRNA transcript (SSU-rRNA, 5.8S rRNA, LSU-rRNA)"/>
    <property type="evidence" value="ECO:0007669"/>
    <property type="project" value="EnsemblFungi"/>
</dbReference>
<dbReference type="InterPro" id="IPR009292">
    <property type="entry name" value="RRP36"/>
</dbReference>
<dbReference type="PANTHER" id="PTHR21738">
    <property type="entry name" value="RIBOSOMAL RNA PROCESSING PROTEIN 36 HOMOLOG"/>
    <property type="match status" value="1"/>
</dbReference>
<dbReference type="PANTHER" id="PTHR21738:SF0">
    <property type="entry name" value="RIBOSOMAL RNA PROCESSING PROTEIN 36 HOMOLOG"/>
    <property type="match status" value="1"/>
</dbReference>
<dbReference type="Pfam" id="PF06102">
    <property type="entry name" value="RRP36"/>
    <property type="match status" value="1"/>
</dbReference>
<name>RRP36_PICST</name>
<organism>
    <name type="scientific">Scheffersomyces stipitis (strain ATCC 58785 / CBS 6054 / NBRC 10063 / NRRL Y-11545)</name>
    <name type="common">Yeast</name>
    <name type="synonym">Pichia stipitis</name>
    <dbReference type="NCBI Taxonomy" id="322104"/>
    <lineage>
        <taxon>Eukaryota</taxon>
        <taxon>Fungi</taxon>
        <taxon>Dikarya</taxon>
        <taxon>Ascomycota</taxon>
        <taxon>Saccharomycotina</taxon>
        <taxon>Pichiomycetes</taxon>
        <taxon>Debaryomycetaceae</taxon>
        <taxon>Scheffersomyces</taxon>
    </lineage>
</organism>
<proteinExistence type="inferred from homology"/>
<evidence type="ECO:0000250" key="1"/>
<evidence type="ECO:0000255" key="2"/>
<evidence type="ECO:0000256" key="3">
    <source>
        <dbReference type="SAM" id="MobiDB-lite"/>
    </source>
</evidence>
<evidence type="ECO:0000305" key="4"/>
<reference key="1">
    <citation type="journal article" date="2007" name="Nat. Biotechnol.">
        <title>Genome sequence of the lignocellulose-bioconverting and xylose-fermenting yeast Pichia stipitis.</title>
        <authorList>
            <person name="Jeffries T.W."/>
            <person name="Grigoriev I.V."/>
            <person name="Grimwood J."/>
            <person name="Laplaza J.M."/>
            <person name="Aerts A."/>
            <person name="Salamov A."/>
            <person name="Schmutz J."/>
            <person name="Lindquist E."/>
            <person name="Dehal P."/>
            <person name="Shapiro H."/>
            <person name="Jin Y.-S."/>
            <person name="Passoth V."/>
            <person name="Richardson P.M."/>
        </authorList>
    </citation>
    <scope>NUCLEOTIDE SEQUENCE [LARGE SCALE GENOMIC DNA]</scope>
    <source>
        <strain>ATCC 58785 / CBS 6054 / NBRC 10063 / NRRL Y-11545</strain>
    </source>
</reference>
<protein>
    <recommendedName>
        <fullName>rRNA biogenesis protein RRP36</fullName>
    </recommendedName>
    <alternativeName>
        <fullName>Ribosomal RNA-processing protein 36</fullName>
    </alternativeName>
</protein>
<accession>A3LP95</accession>
<gene>
    <name type="primary">RRP36</name>
    <name type="ORF">PICST_35049</name>
</gene>